<reference key="1">
    <citation type="journal article" date="1999" name="Nature">
        <title>Sequence and analysis of chromosome 2 of the plant Arabidopsis thaliana.</title>
        <authorList>
            <person name="Lin X."/>
            <person name="Kaul S."/>
            <person name="Rounsley S.D."/>
            <person name="Shea T.P."/>
            <person name="Benito M.-I."/>
            <person name="Town C.D."/>
            <person name="Fujii C.Y."/>
            <person name="Mason T.M."/>
            <person name="Bowman C.L."/>
            <person name="Barnstead M.E."/>
            <person name="Feldblyum T.V."/>
            <person name="Buell C.R."/>
            <person name="Ketchum K.A."/>
            <person name="Lee J.J."/>
            <person name="Ronning C.M."/>
            <person name="Koo H.L."/>
            <person name="Moffat K.S."/>
            <person name="Cronin L.A."/>
            <person name="Shen M."/>
            <person name="Pai G."/>
            <person name="Van Aken S."/>
            <person name="Umayam L."/>
            <person name="Tallon L.J."/>
            <person name="Gill J.E."/>
            <person name="Adams M.D."/>
            <person name="Carrera A.J."/>
            <person name="Creasy T.H."/>
            <person name="Goodman H.M."/>
            <person name="Somerville C.R."/>
            <person name="Copenhaver G.P."/>
            <person name="Preuss D."/>
            <person name="Nierman W.C."/>
            <person name="White O."/>
            <person name="Eisen J.A."/>
            <person name="Salzberg S.L."/>
            <person name="Fraser C.M."/>
            <person name="Venter J.C."/>
        </authorList>
    </citation>
    <scope>NUCLEOTIDE SEQUENCE [LARGE SCALE GENOMIC DNA]</scope>
    <source>
        <strain>cv. Columbia</strain>
    </source>
</reference>
<reference key="2">
    <citation type="journal article" date="2017" name="Plant J.">
        <title>Araport11: a complete reannotation of the Arabidopsis thaliana reference genome.</title>
        <authorList>
            <person name="Cheng C.Y."/>
            <person name="Krishnakumar V."/>
            <person name="Chan A.P."/>
            <person name="Thibaud-Nissen F."/>
            <person name="Schobel S."/>
            <person name="Town C.D."/>
        </authorList>
    </citation>
    <scope>GENOME REANNOTATION</scope>
    <source>
        <strain>cv. Columbia</strain>
    </source>
</reference>
<reference key="3">
    <citation type="journal article" date="2003" name="Science">
        <title>Empirical analysis of transcriptional activity in the Arabidopsis genome.</title>
        <authorList>
            <person name="Yamada K."/>
            <person name="Lim J."/>
            <person name="Dale J.M."/>
            <person name="Chen H."/>
            <person name="Shinn P."/>
            <person name="Palm C.J."/>
            <person name="Southwick A.M."/>
            <person name="Wu H.C."/>
            <person name="Kim C.J."/>
            <person name="Nguyen M."/>
            <person name="Pham P.K."/>
            <person name="Cheuk R.F."/>
            <person name="Karlin-Newmann G."/>
            <person name="Liu S.X."/>
            <person name="Lam B."/>
            <person name="Sakano H."/>
            <person name="Wu T."/>
            <person name="Yu G."/>
            <person name="Miranda M."/>
            <person name="Quach H.L."/>
            <person name="Tripp M."/>
            <person name="Chang C.H."/>
            <person name="Lee J.M."/>
            <person name="Toriumi M.J."/>
            <person name="Chan M.M."/>
            <person name="Tang C.C."/>
            <person name="Onodera C.S."/>
            <person name="Deng J.M."/>
            <person name="Akiyama K."/>
            <person name="Ansari Y."/>
            <person name="Arakawa T."/>
            <person name="Banh J."/>
            <person name="Banno F."/>
            <person name="Bowser L."/>
            <person name="Brooks S.Y."/>
            <person name="Carninci P."/>
            <person name="Chao Q."/>
            <person name="Choy N."/>
            <person name="Enju A."/>
            <person name="Goldsmith A.D."/>
            <person name="Gurjal M."/>
            <person name="Hansen N.F."/>
            <person name="Hayashizaki Y."/>
            <person name="Johnson-Hopson C."/>
            <person name="Hsuan V.W."/>
            <person name="Iida K."/>
            <person name="Karnes M."/>
            <person name="Khan S."/>
            <person name="Koesema E."/>
            <person name="Ishida J."/>
            <person name="Jiang P.X."/>
            <person name="Jones T."/>
            <person name="Kawai J."/>
            <person name="Kamiya A."/>
            <person name="Meyers C."/>
            <person name="Nakajima M."/>
            <person name="Narusaka M."/>
            <person name="Seki M."/>
            <person name="Sakurai T."/>
            <person name="Satou M."/>
            <person name="Tamse R."/>
            <person name="Vaysberg M."/>
            <person name="Wallender E.K."/>
            <person name="Wong C."/>
            <person name="Yamamura Y."/>
            <person name="Yuan S."/>
            <person name="Shinozaki K."/>
            <person name="Davis R.W."/>
            <person name="Theologis A."/>
            <person name="Ecker J.R."/>
        </authorList>
    </citation>
    <scope>NUCLEOTIDE SEQUENCE [LARGE SCALE MRNA]</scope>
    <source>
        <strain>cv. Columbia</strain>
    </source>
</reference>
<reference key="4">
    <citation type="submission" date="2002-03" db="EMBL/GenBank/DDBJ databases">
        <title>Full-length cDNA from Arabidopsis thaliana.</title>
        <authorList>
            <person name="Brover V.V."/>
            <person name="Troukhan M.E."/>
            <person name="Alexandrov N.A."/>
            <person name="Lu Y.-P."/>
            <person name="Flavell R.B."/>
            <person name="Feldmann K.A."/>
        </authorList>
    </citation>
    <scope>NUCLEOTIDE SEQUENCE [LARGE SCALE MRNA]</scope>
</reference>
<reference key="5">
    <citation type="journal article" date="2009" name="EMBO J.">
        <title>Control of the pattern-recognition receptor EFR by an ER protein complex in plant immunity.</title>
        <authorList>
            <person name="Nekrasov V."/>
            <person name="Li J."/>
            <person name="Batoux M."/>
            <person name="Roux M."/>
            <person name="Chu Z.H."/>
            <person name="Lacombe S."/>
            <person name="Rougon A."/>
            <person name="Bittel P."/>
            <person name="Kiss-Papp M."/>
            <person name="Chinchilla D."/>
            <person name="van Esse H.P."/>
            <person name="Jorda L."/>
            <person name="Schwessinger B."/>
            <person name="Nicaise V."/>
            <person name="Thomma B.P."/>
            <person name="Molina A."/>
            <person name="Jones J.D."/>
            <person name="Zipfel C."/>
        </authorList>
    </citation>
    <scope>FUNCTION</scope>
    <scope>INTERACTION WITH ERDJ3B</scope>
    <scope>SUBCELLULAR LOCATION</scope>
    <scope>DISRUPTION PHENOTYPE</scope>
    <scope>MUTAGENESIS OF GLY-64</scope>
</reference>
<reference key="6">
    <citation type="journal article" date="2010" name="J. Biol. Chem.">
        <title>Arabidopsis stromal-derived Factor2 (SDF2) is a crucial target of the unfolded protein response in the endoplasmic reticulum.</title>
        <authorList>
            <person name="Schott A."/>
            <person name="Ravaud S."/>
            <person name="Keller S."/>
            <person name="Radzimanowski J."/>
            <person name="Viotti C."/>
            <person name="Hillmer S."/>
            <person name="Sinning I."/>
            <person name="Strahl S."/>
        </authorList>
    </citation>
    <scope>X-RAY CRYSTALLOGRAPHY (1.95 ANGSTROMS) OF 24-218</scope>
    <scope>FUNCTION</scope>
    <scope>INDUCTION</scope>
</reference>
<proteinExistence type="evidence at protein level"/>
<gene>
    <name type="primary">SDF2</name>
    <name type="ordered locus">At2g25110</name>
    <name type="ORF">F13D4.70</name>
</gene>
<name>SDF2_ARATH</name>
<organism>
    <name type="scientific">Arabidopsis thaliana</name>
    <name type="common">Mouse-ear cress</name>
    <dbReference type="NCBI Taxonomy" id="3702"/>
    <lineage>
        <taxon>Eukaryota</taxon>
        <taxon>Viridiplantae</taxon>
        <taxon>Streptophyta</taxon>
        <taxon>Embryophyta</taxon>
        <taxon>Tracheophyta</taxon>
        <taxon>Spermatophyta</taxon>
        <taxon>Magnoliopsida</taxon>
        <taxon>eudicotyledons</taxon>
        <taxon>Gunneridae</taxon>
        <taxon>Pentapetalae</taxon>
        <taxon>rosids</taxon>
        <taxon>malvids</taxon>
        <taxon>Brassicales</taxon>
        <taxon>Brassicaceae</taxon>
        <taxon>Camelineae</taxon>
        <taxon>Arabidopsis</taxon>
    </lineage>
</organism>
<dbReference type="EMBL" id="CP002685">
    <property type="protein sequence ID" value="AEC07659.1"/>
    <property type="molecule type" value="Genomic_DNA"/>
</dbReference>
<dbReference type="EMBL" id="AY057588">
    <property type="protein sequence ID" value="AAL14383.1"/>
    <property type="molecule type" value="mRNA"/>
</dbReference>
<dbReference type="EMBL" id="AY143822">
    <property type="protein sequence ID" value="AAN28761.1"/>
    <property type="molecule type" value="mRNA"/>
</dbReference>
<dbReference type="EMBL" id="AY088079">
    <property type="protein sequence ID" value="AAM65625.1"/>
    <property type="molecule type" value="mRNA"/>
</dbReference>
<dbReference type="PIR" id="D84644">
    <property type="entry name" value="D84644"/>
</dbReference>
<dbReference type="RefSeq" id="NP_565585.1">
    <property type="nucleotide sequence ID" value="NM_128068.3"/>
</dbReference>
<dbReference type="PDB" id="3MAL">
    <property type="method" value="X-ray"/>
    <property type="resolution" value="1.95 A"/>
    <property type="chains" value="A/B=24-218"/>
</dbReference>
<dbReference type="PDBsum" id="3MAL"/>
<dbReference type="SMR" id="Q93ZE8"/>
<dbReference type="BioGRID" id="2401">
    <property type="interactions" value="1"/>
</dbReference>
<dbReference type="FunCoup" id="Q93ZE8">
    <property type="interactions" value="3565"/>
</dbReference>
<dbReference type="IntAct" id="Q93ZE8">
    <property type="interactions" value="1"/>
</dbReference>
<dbReference type="MINT" id="Q93ZE8"/>
<dbReference type="STRING" id="3702.Q93ZE8"/>
<dbReference type="GlyCosmos" id="Q93ZE8">
    <property type="glycosylation" value="1 site, No reported glycans"/>
</dbReference>
<dbReference type="GlyGen" id="Q93ZE8">
    <property type="glycosylation" value="1 site"/>
</dbReference>
<dbReference type="PaxDb" id="3702-AT2G25110.1"/>
<dbReference type="ProteomicsDB" id="232857"/>
<dbReference type="DNASU" id="817049"/>
<dbReference type="EnsemblPlants" id="AT2G25110.1">
    <property type="protein sequence ID" value="AT2G25110.1"/>
    <property type="gene ID" value="AT2G25110"/>
</dbReference>
<dbReference type="GeneID" id="817049"/>
<dbReference type="Gramene" id="AT2G25110.1">
    <property type="protein sequence ID" value="AT2G25110.1"/>
    <property type="gene ID" value="AT2G25110"/>
</dbReference>
<dbReference type="KEGG" id="ath:AT2G25110"/>
<dbReference type="Araport" id="AT2G25110"/>
<dbReference type="TAIR" id="AT2G25110">
    <property type="gene designation" value="SDF2"/>
</dbReference>
<dbReference type="eggNOG" id="KOG3358">
    <property type="taxonomic scope" value="Eukaryota"/>
</dbReference>
<dbReference type="HOGENOM" id="CLU_078126_0_0_1"/>
<dbReference type="InParanoid" id="Q93ZE8"/>
<dbReference type="OMA" id="KPQHGTR"/>
<dbReference type="PhylomeDB" id="Q93ZE8"/>
<dbReference type="CD-CODE" id="4299E36E">
    <property type="entry name" value="Nucleolus"/>
</dbReference>
<dbReference type="EvolutionaryTrace" id="Q93ZE8"/>
<dbReference type="PRO" id="PR:Q93ZE8"/>
<dbReference type="Proteomes" id="UP000006548">
    <property type="component" value="Chromosome 2"/>
</dbReference>
<dbReference type="ExpressionAtlas" id="Q93ZE8">
    <property type="expression patterns" value="baseline and differential"/>
</dbReference>
<dbReference type="GO" id="GO:0005783">
    <property type="term" value="C:endoplasmic reticulum"/>
    <property type="evidence" value="ECO:0000314"/>
    <property type="project" value="TAIR"/>
</dbReference>
<dbReference type="GO" id="GO:0005773">
    <property type="term" value="C:vacuole"/>
    <property type="evidence" value="ECO:0007005"/>
    <property type="project" value="TAIR"/>
</dbReference>
<dbReference type="GO" id="GO:0042742">
    <property type="term" value="P:defense response to bacterium"/>
    <property type="evidence" value="ECO:0000315"/>
    <property type="project" value="TAIR"/>
</dbReference>
<dbReference type="GO" id="GO:0050832">
    <property type="term" value="P:defense response to fungus"/>
    <property type="evidence" value="ECO:0000315"/>
    <property type="project" value="TAIR"/>
</dbReference>
<dbReference type="GO" id="GO:0002221">
    <property type="term" value="P:pattern recognition receptor signaling pathway"/>
    <property type="evidence" value="ECO:0000315"/>
    <property type="project" value="TAIR"/>
</dbReference>
<dbReference type="CDD" id="cd23294">
    <property type="entry name" value="beta-trefoil_MIR_AtSDF2-like"/>
    <property type="match status" value="1"/>
</dbReference>
<dbReference type="FunFam" id="2.80.10.50:FF:000068">
    <property type="entry name" value="Stromal cell-derived factor 2-like protein"/>
    <property type="match status" value="1"/>
</dbReference>
<dbReference type="Gene3D" id="2.80.10.50">
    <property type="match status" value="1"/>
</dbReference>
<dbReference type="InterPro" id="IPR036300">
    <property type="entry name" value="MIR_dom_sf"/>
</dbReference>
<dbReference type="InterPro" id="IPR016093">
    <property type="entry name" value="MIR_motif"/>
</dbReference>
<dbReference type="PANTHER" id="PTHR46809:SF2">
    <property type="entry name" value="GH21273P"/>
    <property type="match status" value="1"/>
</dbReference>
<dbReference type="PANTHER" id="PTHR46809">
    <property type="entry name" value="STROMAL CELL-DERIVED FACTOR 2-LIKE PROTEIN"/>
    <property type="match status" value="1"/>
</dbReference>
<dbReference type="Pfam" id="PF02815">
    <property type="entry name" value="MIR"/>
    <property type="match status" value="1"/>
</dbReference>
<dbReference type="SMART" id="SM00472">
    <property type="entry name" value="MIR"/>
    <property type="match status" value="3"/>
</dbReference>
<dbReference type="SUPFAM" id="SSF82109">
    <property type="entry name" value="MIR domain"/>
    <property type="match status" value="1"/>
</dbReference>
<dbReference type="PROSITE" id="PS50919">
    <property type="entry name" value="MIR"/>
    <property type="match status" value="3"/>
</dbReference>
<comment type="function">
    <text evidence="3 4">Involved in the endoplasmic reticulum (ER) protein quality control and unfolded protein response. May be involved in the quality control of glycoproteins. Forms a complex in the ER with ERDJ3B and MED37A/BIP1 which is required for the proper accumulation and function of the surface-exposed leucine-rich repeat receptor kinases EFR involved in pathogen-associated molecular pattern (PAMP) triggered immunity.</text>
</comment>
<comment type="subunit">
    <text evidence="3">Interacts with ERDJ3B.</text>
</comment>
<comment type="subcellular location">
    <subcellularLocation>
        <location evidence="3">Endoplasmic reticulum</location>
    </subcellularLocation>
</comment>
<comment type="induction">
    <text evidence="4">By tunicamycin.</text>
</comment>
<comment type="disruption phenotype">
    <text evidence="3">No visible phenotype under normal growth conditions, but mutant plants are insensitive to seedling growth inhibition in response to the pathogen-associated molecular pattern (PAMP) elf18 and show increased susceptibility to phytopathogenic bacteria.</text>
</comment>
<protein>
    <recommendedName>
        <fullName>Stromal cell-derived factor 2-like protein</fullName>
        <shortName>AtSDF2</shortName>
        <shortName>SDF2-like protein</shortName>
    </recommendedName>
</protein>
<sequence length="218" mass="23935">MALGFFCLAIFLYLSLDPDSGYTSASAAASGKEGVEITYGSAIKLMHEKTKFRLHSHDVPYGSGSGQQSVTGFPGVVDSNSYWIVKPVPGTTEKQGDAVKSGATIRLQHMKTRKWLHSHLHASPISGNLEVSCFGDDTNSDTGDHWKLIIEGSGKTWKQDQRVRLQHIDTSGYLHSHDKKYQRIAGGQQEVCGIREKKADNIWLAAEGVYLPLNESSK</sequence>
<feature type="signal peptide" evidence="1">
    <location>
        <begin position="1"/>
        <end position="21"/>
    </location>
</feature>
<feature type="chain" id="PRO_0000031959" description="Stromal cell-derived factor 2-like protein">
    <location>
        <begin position="22"/>
        <end position="218"/>
    </location>
</feature>
<feature type="domain" description="MIR 1" evidence="2">
    <location>
        <begin position="34"/>
        <end position="88"/>
    </location>
</feature>
<feature type="domain" description="MIR 2" evidence="2">
    <location>
        <begin position="96"/>
        <end position="151"/>
    </location>
</feature>
<feature type="domain" description="MIR 3" evidence="2">
    <location>
        <begin position="154"/>
        <end position="208"/>
    </location>
</feature>
<feature type="glycosylation site" description="N-linked (GlcNAc...) asparagine" evidence="1">
    <location>
        <position position="214"/>
    </location>
</feature>
<feature type="mutagenesis site" description="In sdf2-3; decreased response to the PAMP elf18." evidence="3">
    <original>G</original>
    <variation>D</variation>
    <location>
        <position position="64"/>
    </location>
</feature>
<feature type="sequence conflict" description="In Ref. 4; AAM65625." evidence="5" ref="4">
    <original>W</original>
    <variation>C</variation>
    <location>
        <position position="203"/>
    </location>
</feature>
<feature type="strand" evidence="6">
    <location>
        <begin position="42"/>
        <end position="47"/>
    </location>
</feature>
<feature type="turn" evidence="6">
    <location>
        <begin position="48"/>
        <end position="50"/>
    </location>
</feature>
<feature type="strand" evidence="6">
    <location>
        <begin position="53"/>
        <end position="60"/>
    </location>
</feature>
<feature type="strand" evidence="6">
    <location>
        <begin position="68"/>
        <end position="73"/>
    </location>
</feature>
<feature type="helix" evidence="6">
    <location>
        <begin position="79"/>
        <end position="81"/>
    </location>
</feature>
<feature type="strand" evidence="6">
    <location>
        <begin position="83"/>
        <end position="86"/>
    </location>
</feature>
<feature type="strand" evidence="6">
    <location>
        <begin position="104"/>
        <end position="109"/>
    </location>
</feature>
<feature type="turn" evidence="6">
    <location>
        <begin position="110"/>
        <end position="112"/>
    </location>
</feature>
<feature type="strand" evidence="6">
    <location>
        <begin position="115"/>
        <end position="122"/>
    </location>
</feature>
<feature type="turn" evidence="6">
    <location>
        <begin position="124"/>
        <end position="126"/>
    </location>
</feature>
<feature type="strand" evidence="6">
    <location>
        <begin position="128"/>
        <end position="134"/>
    </location>
</feature>
<feature type="helix" evidence="6">
    <location>
        <begin position="142"/>
        <end position="144"/>
    </location>
</feature>
<feature type="strand" evidence="6">
    <location>
        <begin position="146"/>
        <end position="153"/>
    </location>
</feature>
<feature type="strand" evidence="6">
    <location>
        <begin position="162"/>
        <end position="167"/>
    </location>
</feature>
<feature type="turn" evidence="6">
    <location>
        <begin position="168"/>
        <end position="170"/>
    </location>
</feature>
<feature type="strand" evidence="6">
    <location>
        <begin position="173"/>
        <end position="180"/>
    </location>
</feature>
<feature type="strand" evidence="6">
    <location>
        <begin position="183"/>
        <end position="185"/>
    </location>
</feature>
<feature type="strand" evidence="6">
    <location>
        <begin position="189"/>
        <end position="196"/>
    </location>
</feature>
<feature type="helix" evidence="6">
    <location>
        <begin position="199"/>
        <end position="201"/>
    </location>
</feature>
<feature type="strand" evidence="6">
    <location>
        <begin position="203"/>
        <end position="209"/>
    </location>
</feature>
<accession>Q93ZE8</accession>
<accession>O81720</accession>
<accession>Q9SEZ5</accession>
<keyword id="KW-0002">3D-structure</keyword>
<keyword id="KW-0256">Endoplasmic reticulum</keyword>
<keyword id="KW-0325">Glycoprotein</keyword>
<keyword id="KW-0611">Plant defense</keyword>
<keyword id="KW-1185">Reference proteome</keyword>
<keyword id="KW-0677">Repeat</keyword>
<keyword id="KW-0732">Signal</keyword>
<evidence type="ECO:0000255" key="1"/>
<evidence type="ECO:0000255" key="2">
    <source>
        <dbReference type="PROSITE-ProRule" id="PRU00131"/>
    </source>
</evidence>
<evidence type="ECO:0000269" key="3">
    <source>
    </source>
</evidence>
<evidence type="ECO:0000269" key="4">
    <source>
    </source>
</evidence>
<evidence type="ECO:0000305" key="5"/>
<evidence type="ECO:0007829" key="6">
    <source>
        <dbReference type="PDB" id="3MAL"/>
    </source>
</evidence>